<proteinExistence type="inferred from homology"/>
<sequence>MSVADINKQEVVKQFARGTNDTGSPEVQVALLTARINELTPHFKAHMKDHHSRRGLLKMVSRRRRLLDYLKKNDADRYRSLIEKLGLRK</sequence>
<reference key="1">
    <citation type="journal article" date="2002" name="Nature">
        <title>Genome sequence of the plant pathogen Ralstonia solanacearum.</title>
        <authorList>
            <person name="Salanoubat M."/>
            <person name="Genin S."/>
            <person name="Artiguenave F."/>
            <person name="Gouzy J."/>
            <person name="Mangenot S."/>
            <person name="Arlat M."/>
            <person name="Billault A."/>
            <person name="Brottier P."/>
            <person name="Camus J.-C."/>
            <person name="Cattolico L."/>
            <person name="Chandler M."/>
            <person name="Choisne N."/>
            <person name="Claudel-Renard C."/>
            <person name="Cunnac S."/>
            <person name="Demange N."/>
            <person name="Gaspin C."/>
            <person name="Lavie M."/>
            <person name="Moisan A."/>
            <person name="Robert C."/>
            <person name="Saurin W."/>
            <person name="Schiex T."/>
            <person name="Siguier P."/>
            <person name="Thebault P."/>
            <person name="Whalen M."/>
            <person name="Wincker P."/>
            <person name="Levy M."/>
            <person name="Weissenbach J."/>
            <person name="Boucher C.A."/>
        </authorList>
    </citation>
    <scope>NUCLEOTIDE SEQUENCE [LARGE SCALE GENOMIC DNA]</scope>
    <source>
        <strain>ATCC BAA-1114 / GMI1000</strain>
    </source>
</reference>
<organism>
    <name type="scientific">Ralstonia nicotianae (strain ATCC BAA-1114 / GMI1000)</name>
    <name type="common">Ralstonia solanacearum</name>
    <dbReference type="NCBI Taxonomy" id="267608"/>
    <lineage>
        <taxon>Bacteria</taxon>
        <taxon>Pseudomonadati</taxon>
        <taxon>Pseudomonadota</taxon>
        <taxon>Betaproteobacteria</taxon>
        <taxon>Burkholderiales</taxon>
        <taxon>Burkholderiaceae</taxon>
        <taxon>Ralstonia</taxon>
        <taxon>Ralstonia solanacearum species complex</taxon>
    </lineage>
</organism>
<feature type="chain" id="PRO_0000115519" description="Small ribosomal subunit protein uS15">
    <location>
        <begin position="1"/>
        <end position="89"/>
    </location>
</feature>
<protein>
    <recommendedName>
        <fullName evidence="1">Small ribosomal subunit protein uS15</fullName>
    </recommendedName>
    <alternativeName>
        <fullName evidence="2">30S ribosomal protein S15</fullName>
    </alternativeName>
</protein>
<comment type="function">
    <text evidence="1">One of the primary rRNA binding proteins, it binds directly to 16S rRNA where it helps nucleate assembly of the platform of the 30S subunit by binding and bridging several RNA helices of the 16S rRNA.</text>
</comment>
<comment type="function">
    <text evidence="1">Forms an intersubunit bridge (bridge B4) with the 23S rRNA of the 50S subunit in the ribosome.</text>
</comment>
<comment type="subunit">
    <text evidence="1">Part of the 30S ribosomal subunit. Forms a bridge to the 50S subunit in the 70S ribosome, contacting the 23S rRNA.</text>
</comment>
<comment type="similarity">
    <text evidence="1">Belongs to the universal ribosomal protein uS15 family.</text>
</comment>
<name>RS15_RALN1</name>
<gene>
    <name evidence="1" type="primary">rpsO</name>
    <name type="ordered locus">RSc2069</name>
    <name type="ORF">RS03634</name>
</gene>
<dbReference type="EMBL" id="AL646052">
    <property type="protein sequence ID" value="CAD15776.1"/>
    <property type="molecule type" value="Genomic_DNA"/>
</dbReference>
<dbReference type="RefSeq" id="WP_011002001.1">
    <property type="nucleotide sequence ID" value="NC_003295.1"/>
</dbReference>
<dbReference type="SMR" id="Q8XXP4"/>
<dbReference type="STRING" id="267608.RSc2069"/>
<dbReference type="EnsemblBacteria" id="CAD15776">
    <property type="protein sequence ID" value="CAD15776"/>
    <property type="gene ID" value="RSc2069"/>
</dbReference>
<dbReference type="KEGG" id="rso:RSc2069"/>
<dbReference type="eggNOG" id="COG0184">
    <property type="taxonomic scope" value="Bacteria"/>
</dbReference>
<dbReference type="HOGENOM" id="CLU_148518_0_0_4"/>
<dbReference type="Proteomes" id="UP000001436">
    <property type="component" value="Chromosome"/>
</dbReference>
<dbReference type="GO" id="GO:0022627">
    <property type="term" value="C:cytosolic small ribosomal subunit"/>
    <property type="evidence" value="ECO:0007669"/>
    <property type="project" value="TreeGrafter"/>
</dbReference>
<dbReference type="GO" id="GO:0019843">
    <property type="term" value="F:rRNA binding"/>
    <property type="evidence" value="ECO:0007669"/>
    <property type="project" value="UniProtKB-UniRule"/>
</dbReference>
<dbReference type="GO" id="GO:0003735">
    <property type="term" value="F:structural constituent of ribosome"/>
    <property type="evidence" value="ECO:0007669"/>
    <property type="project" value="InterPro"/>
</dbReference>
<dbReference type="GO" id="GO:0006412">
    <property type="term" value="P:translation"/>
    <property type="evidence" value="ECO:0007669"/>
    <property type="project" value="UniProtKB-UniRule"/>
</dbReference>
<dbReference type="CDD" id="cd00353">
    <property type="entry name" value="Ribosomal_S15p_S13e"/>
    <property type="match status" value="1"/>
</dbReference>
<dbReference type="FunFam" id="1.10.287.10:FF:000002">
    <property type="entry name" value="30S ribosomal protein S15"/>
    <property type="match status" value="1"/>
</dbReference>
<dbReference type="Gene3D" id="6.10.250.3130">
    <property type="match status" value="1"/>
</dbReference>
<dbReference type="Gene3D" id="1.10.287.10">
    <property type="entry name" value="S15/NS1, RNA-binding"/>
    <property type="match status" value="1"/>
</dbReference>
<dbReference type="HAMAP" id="MF_01343_B">
    <property type="entry name" value="Ribosomal_uS15_B"/>
    <property type="match status" value="1"/>
</dbReference>
<dbReference type="InterPro" id="IPR000589">
    <property type="entry name" value="Ribosomal_uS15"/>
</dbReference>
<dbReference type="InterPro" id="IPR005290">
    <property type="entry name" value="Ribosomal_uS15_bac-type"/>
</dbReference>
<dbReference type="InterPro" id="IPR009068">
    <property type="entry name" value="uS15_NS1_RNA-bd_sf"/>
</dbReference>
<dbReference type="NCBIfam" id="TIGR00952">
    <property type="entry name" value="S15_bact"/>
    <property type="match status" value="1"/>
</dbReference>
<dbReference type="PANTHER" id="PTHR23321">
    <property type="entry name" value="RIBOSOMAL PROTEIN S15, BACTERIAL AND ORGANELLAR"/>
    <property type="match status" value="1"/>
</dbReference>
<dbReference type="PANTHER" id="PTHR23321:SF26">
    <property type="entry name" value="SMALL RIBOSOMAL SUBUNIT PROTEIN US15M"/>
    <property type="match status" value="1"/>
</dbReference>
<dbReference type="Pfam" id="PF00312">
    <property type="entry name" value="Ribosomal_S15"/>
    <property type="match status" value="1"/>
</dbReference>
<dbReference type="SMART" id="SM01387">
    <property type="entry name" value="Ribosomal_S15"/>
    <property type="match status" value="1"/>
</dbReference>
<dbReference type="SUPFAM" id="SSF47060">
    <property type="entry name" value="S15/NS1 RNA-binding domain"/>
    <property type="match status" value="1"/>
</dbReference>
<dbReference type="PROSITE" id="PS00362">
    <property type="entry name" value="RIBOSOMAL_S15"/>
    <property type="match status" value="1"/>
</dbReference>
<evidence type="ECO:0000255" key="1">
    <source>
        <dbReference type="HAMAP-Rule" id="MF_01343"/>
    </source>
</evidence>
<evidence type="ECO:0000305" key="2"/>
<keyword id="KW-1185">Reference proteome</keyword>
<keyword id="KW-0687">Ribonucleoprotein</keyword>
<keyword id="KW-0689">Ribosomal protein</keyword>
<keyword id="KW-0694">RNA-binding</keyword>
<keyword id="KW-0699">rRNA-binding</keyword>
<accession>Q8XXP4</accession>